<gene>
    <name type="primary">neoC</name>
    <name type="synonym">nemA</name>
</gene>
<evidence type="ECO:0000250" key="1">
    <source>
        <dbReference type="UniProtKB" id="Q9S5E2"/>
    </source>
</evidence>
<evidence type="ECO:0000256" key="2">
    <source>
        <dbReference type="SAM" id="MobiDB-lite"/>
    </source>
</evidence>
<evidence type="ECO:0000269" key="3">
    <source>
    </source>
</evidence>
<evidence type="ECO:0000269" key="4">
    <source ref="5"/>
</evidence>
<evidence type="ECO:0000305" key="5"/>
<sequence>MQTTRIAMEDASFPYRLGTDCAEDVVARLAALEASSYLVVADTTVAELYGAALTAHIDKEAGPSHLLTHEVGEVHKTLATVSALAEQALGRGADRRSVVVALGGGVTGNIAGLMASLLFRGIRLVHVPTTVVAMLDSVLSLKQAVNTTFGKNLAGTFYQPVEVLADTAALRTLPPREIRSGMGEVVKNALAIRPAMLDRLAGALRPDTRYDDETMRWIIAESLAAKADVTSGDKHERRSGLVLEYGHTAGHAIEHASRGAVAHGAGVAVGMTLAAEVSRRLGHADAGLVALHRELVAAAGVEPAVPDHVDTALVKNWLAYDNKRGYLDSPPGHTPMVLLSAPGEVLHTGTMPLVPVPLALLEEVVDESAARGGAGGGAAEPAAARTGPVPDGPEAAVPATPGPVPAGPAAAAPLPSGPAPTAPAAAGPVP</sequence>
<name>DOIS_STRFR</name>
<organism>
    <name type="scientific">Streptomyces fradiae</name>
    <name type="common">Streptomyces roseoflavus</name>
    <dbReference type="NCBI Taxonomy" id="1906"/>
    <lineage>
        <taxon>Bacteria</taxon>
        <taxon>Bacillati</taxon>
        <taxon>Actinomycetota</taxon>
        <taxon>Actinomycetes</taxon>
        <taxon>Kitasatosporales</taxon>
        <taxon>Streptomycetaceae</taxon>
        <taxon>Streptomyces</taxon>
    </lineage>
</organism>
<comment type="function">
    <text evidence="3 4">Catalyzes the intramolecular carbocycle formation from D-glucose-6-phosphate to 2-deoxy-scyllo-inosose (DOI).</text>
</comment>
<comment type="catalytic activity">
    <reaction>
        <text>D-glucose 6-phosphate = 2-deoxy-L-scyllo-inosose + phosphate</text>
        <dbReference type="Rhea" id="RHEA:33071"/>
        <dbReference type="ChEBI" id="CHEBI:43474"/>
        <dbReference type="ChEBI" id="CHEBI:61548"/>
        <dbReference type="ChEBI" id="CHEBI:64796"/>
        <dbReference type="EC" id="4.2.3.124"/>
    </reaction>
</comment>
<comment type="cofactor">
    <cofactor evidence="4">
        <name>NAD(+)</name>
        <dbReference type="ChEBI" id="CHEBI:57540"/>
    </cofactor>
</comment>
<comment type="cofactor">
    <cofactor evidence="1">
        <name>Co(2+)</name>
        <dbReference type="ChEBI" id="CHEBI:48828"/>
    </cofactor>
    <text evidence="1">Binds 1 Co(2+) ion per subunit.</text>
</comment>
<comment type="pathway">
    <text>Metabolic intermediate biosynthesis; 2-deoxystreptamine biosynthesis; 2-deoxystreptamine from D-glucose 6-phosphate: step 1/4.</text>
</comment>
<comment type="pathway">
    <text>Antibiotic biosynthesis; neomycin biosynthesis.</text>
</comment>
<comment type="similarity">
    <text evidence="5">Belongs to the sugar phosphate cyclases superfamily. DOI synthase family.</text>
</comment>
<dbReference type="EC" id="4.2.3.124"/>
<dbReference type="EMBL" id="AJ629247">
    <property type="protein sequence ID" value="CAF33312.1"/>
    <property type="molecule type" value="Genomic_DNA"/>
</dbReference>
<dbReference type="EMBL" id="AJ786317">
    <property type="protein sequence ID" value="CAH05101.1"/>
    <property type="molecule type" value="Genomic_DNA"/>
</dbReference>
<dbReference type="EMBL" id="AB211959">
    <property type="protein sequence ID" value="BAD95820.1"/>
    <property type="molecule type" value="Genomic_DNA"/>
</dbReference>
<dbReference type="EMBL" id="AJ843080">
    <property type="protein sequence ID" value="CAH58690.1"/>
    <property type="molecule type" value="Genomic_DNA"/>
</dbReference>
<dbReference type="SMR" id="Q53U19"/>
<dbReference type="KEGG" id="ag:BAD95820"/>
<dbReference type="BioCyc" id="MetaCyc:MONOMER-17230"/>
<dbReference type="UniPathway" id="UPA00907">
    <property type="reaction ID" value="UER00921"/>
</dbReference>
<dbReference type="UniPathway" id="UPA00969"/>
<dbReference type="GO" id="GO:0003856">
    <property type="term" value="F:3-dehydroquinate synthase activity"/>
    <property type="evidence" value="ECO:0007669"/>
    <property type="project" value="TreeGrafter"/>
</dbReference>
<dbReference type="GO" id="GO:0046872">
    <property type="term" value="F:metal ion binding"/>
    <property type="evidence" value="ECO:0007669"/>
    <property type="project" value="UniProtKB-KW"/>
</dbReference>
<dbReference type="GO" id="GO:0017000">
    <property type="term" value="P:antibiotic biosynthetic process"/>
    <property type="evidence" value="ECO:0007669"/>
    <property type="project" value="UniProtKB-KW"/>
</dbReference>
<dbReference type="CDD" id="cd08197">
    <property type="entry name" value="DOIS"/>
    <property type="match status" value="1"/>
</dbReference>
<dbReference type="Gene3D" id="3.40.50.1970">
    <property type="match status" value="1"/>
</dbReference>
<dbReference type="Gene3D" id="1.20.1090.10">
    <property type="entry name" value="Dehydroquinate synthase-like - alpha domain"/>
    <property type="match status" value="1"/>
</dbReference>
<dbReference type="InterPro" id="IPR050071">
    <property type="entry name" value="Dehydroquinate_synthase"/>
</dbReference>
<dbReference type="InterPro" id="IPR030960">
    <property type="entry name" value="DHQS/DOIS_N"/>
</dbReference>
<dbReference type="InterPro" id="IPR056179">
    <property type="entry name" value="DHQS_C"/>
</dbReference>
<dbReference type="PANTHER" id="PTHR43622">
    <property type="entry name" value="3-DEHYDROQUINATE SYNTHASE"/>
    <property type="match status" value="1"/>
</dbReference>
<dbReference type="PANTHER" id="PTHR43622:SF1">
    <property type="entry name" value="3-DEHYDROQUINATE SYNTHASE"/>
    <property type="match status" value="1"/>
</dbReference>
<dbReference type="Pfam" id="PF01761">
    <property type="entry name" value="DHQ_synthase"/>
    <property type="match status" value="1"/>
</dbReference>
<dbReference type="Pfam" id="PF24621">
    <property type="entry name" value="DHQS_C"/>
    <property type="match status" value="1"/>
</dbReference>
<dbReference type="SUPFAM" id="SSF56796">
    <property type="entry name" value="Dehydroquinate synthase-like"/>
    <property type="match status" value="1"/>
</dbReference>
<accession>Q53U19</accession>
<proteinExistence type="inferred from homology"/>
<feature type="chain" id="PRO_0000234036" description="2-deoxy-scyllo-inosose synthase">
    <location>
        <begin position="1"/>
        <end position="430"/>
    </location>
</feature>
<feature type="region of interest" description="Disordered" evidence="2">
    <location>
        <begin position="371"/>
        <end position="430"/>
    </location>
</feature>
<feature type="compositionally biased region" description="Low complexity" evidence="2">
    <location>
        <begin position="379"/>
        <end position="399"/>
    </location>
</feature>
<feature type="active site" evidence="1">
    <location>
        <position position="142"/>
    </location>
</feature>
<feature type="active site" evidence="1">
    <location>
        <position position="244"/>
    </location>
</feature>
<feature type="binding site" evidence="1">
    <location>
        <position position="42"/>
    </location>
    <ligand>
        <name>NAD(+)</name>
        <dbReference type="ChEBI" id="CHEBI:57540"/>
    </ligand>
</feature>
<feature type="binding site" evidence="1">
    <location>
        <begin position="73"/>
        <end position="76"/>
    </location>
    <ligand>
        <name>NAD(+)</name>
        <dbReference type="ChEBI" id="CHEBI:57540"/>
    </ligand>
</feature>
<feature type="binding site" evidence="1">
    <location>
        <begin position="105"/>
        <end position="109"/>
    </location>
    <ligand>
        <name>NAD(+)</name>
        <dbReference type="ChEBI" id="CHEBI:57540"/>
    </ligand>
</feature>
<feature type="binding site" evidence="1">
    <location>
        <begin position="129"/>
        <end position="130"/>
    </location>
    <ligand>
        <name>NAD(+)</name>
        <dbReference type="ChEBI" id="CHEBI:57540"/>
    </ligand>
</feature>
<feature type="binding site" evidence="1">
    <location>
        <begin position="140"/>
        <end position="142"/>
    </location>
    <ligand>
        <name>NAD(+)</name>
        <dbReference type="ChEBI" id="CHEBI:57540"/>
    </ligand>
</feature>
<feature type="binding site" evidence="1">
    <location>
        <begin position="151"/>
        <end position="152"/>
    </location>
    <ligand>
        <name>NAD(+)</name>
        <dbReference type="ChEBI" id="CHEBI:57540"/>
    </ligand>
</feature>
<feature type="binding site" evidence="1">
    <location>
        <position position="184"/>
    </location>
    <ligand>
        <name>Co(2+)</name>
        <dbReference type="ChEBI" id="CHEBI:48828"/>
    </ligand>
</feature>
<feature type="binding site" evidence="1">
    <location>
        <position position="247"/>
    </location>
    <ligand>
        <name>Co(2+)</name>
        <dbReference type="ChEBI" id="CHEBI:48828"/>
    </ligand>
</feature>
<feature type="binding site" evidence="1">
    <location>
        <position position="263"/>
    </location>
    <ligand>
        <name>Co(2+)</name>
        <dbReference type="ChEBI" id="CHEBI:48828"/>
    </ligand>
</feature>
<keyword id="KW-0045">Antibiotic biosynthesis</keyword>
<keyword id="KW-0170">Cobalt</keyword>
<keyword id="KW-0456">Lyase</keyword>
<keyword id="KW-0479">Metal-binding</keyword>
<keyword id="KW-0520">NAD</keyword>
<protein>
    <recommendedName>
        <fullName>2-deoxy-scyllo-inosose synthase</fullName>
        <shortName>DOI synthase</shortName>
        <shortName>DOIS</shortName>
        <ecNumber>4.2.3.124</ecNumber>
    </recommendedName>
</protein>
<reference key="1">
    <citation type="submission" date="2004-02" db="EMBL/GenBank/DDBJ databases">
        <title>Analysis and comparison of biosynthetic gene clusters for the 2-deoxy-inosamine containing aminoglycoside antibiotics ribostamycin, neomycin, lividomycin, paromomycin and butirosin.</title>
        <authorList>
            <person name="Aboshanab K.M.A."/>
            <person name="Schmidt-Beissner H."/>
            <person name="Wehmeier U.F."/>
            <person name="Piepersberg W."/>
            <person name="Welzel K."/>
            <person name="Vente A."/>
        </authorList>
    </citation>
    <scope>NUCLEOTIDE SEQUENCE [GENOMIC DNA]</scope>
    <source>
        <strain>ATCC 10745 / CBS 498.68 / DSM 40063 / JCM 4133 / NBRC 12773 / NCIMB 8233 / NRRL B-1195 / VKM Ac-150</strain>
    </source>
</reference>
<reference key="2">
    <citation type="submission" date="2004-07" db="EMBL/GenBank/DDBJ databases">
        <title>Cloning and characterization of a neomycin biosynthetic gene cluster from Streptomyces fradiae, ATCC 10745.</title>
        <authorList>
            <person name="Subba B."/>
            <person name="Kharel M.K."/>
            <person name="Sthapit B."/>
            <person name="Liou K."/>
            <person name="Lee H.C."/>
            <person name="Woo J.S."/>
            <person name="Sohng J.K."/>
        </authorList>
    </citation>
    <scope>NUCLEOTIDE SEQUENCE [GENOMIC DNA]</scope>
    <source>
        <strain>ATCC 10745 / CBS 498.68 / DSM 40063 / JCM 4133 / NBRC 12773 / NCIMB 8233 / NRRL B-1195 / VKM Ac-150</strain>
    </source>
</reference>
<reference key="3">
    <citation type="journal article" date="2005" name="J. Antibiot.">
        <title>Biosynthesis of 2-deoxystreptamine by three crucial enzymes in Streptomyces fradiae NBRC 12773.</title>
        <authorList>
            <person name="Kudo F."/>
            <person name="Yamamoto Y."/>
            <person name="Yokoyama K."/>
            <person name="Eguchi T."/>
            <person name="Kakinuma K."/>
        </authorList>
    </citation>
    <scope>NUCLEOTIDE SEQUENCE [GENOMIC DNA]</scope>
    <scope>FUNCTION</scope>
    <source>
        <strain>ATCC 10745 / CBS 498.68 / DSM 40063 / JCM 4133 / NBRC 12773 / NCIMB 8233 / NRRL B-1195 / VKM Ac-150</strain>
    </source>
</reference>
<reference key="4">
    <citation type="journal article" date="2005" name="Org. Biomol. Chem.">
        <title>The neomycin biosynthetic gene cluster of Streptomyces fradiae NCIMB 8233: characterisation of an aminotransferase involved in the formation of 2-deoxystreptamine.</title>
        <authorList>
            <person name="Huang F."/>
            <person name="Haydock S.F."/>
            <person name="Mironenko T."/>
            <person name="Spiteller D."/>
            <person name="Li Y."/>
            <person name="Spencer J.B."/>
        </authorList>
    </citation>
    <scope>NUCLEOTIDE SEQUENCE [GENOMIC DNA]</scope>
    <source>
        <strain>ATCC 10745 / CBS 498.68 / DSM 40063 / JCM 4133 / NBRC 12773 / NCIMB 8233 / NRRL B-1195 / VKM Ac-150</strain>
    </source>
</reference>
<reference key="5">
    <citation type="journal article" date="1995" name="J. Org. Chem.">
        <title>Enzymatic carbocycle formation in microbial secondary metabolism. The mechanism of the 2-deoxy-scyllo-inosose synthase reaction as a crucial step in the 2-deoxystreptamine biosynthesis in Streptomyces fradiae.</title>
        <authorList>
            <person name="Yamauchi N."/>
            <person name="Kakinuma K."/>
        </authorList>
    </citation>
    <scope>FUNCTION</scope>
    <scope>REACTION MECHANISM</scope>
    <scope>COFACTOR</scope>
    <source>
        <strain>ATCC 21096 / DSM 40943 / NBRC 13147 / MA-2898 / NRRL B-3357</strain>
    </source>
</reference>